<evidence type="ECO:0000255" key="1">
    <source>
        <dbReference type="HAMAP-Rule" id="MF_03002"/>
    </source>
</evidence>
<evidence type="ECO:0000255" key="2">
    <source>
        <dbReference type="PROSITE-ProRule" id="PRU01185"/>
    </source>
</evidence>
<evidence type="ECO:0000256" key="3">
    <source>
        <dbReference type="SAM" id="MobiDB-lite"/>
    </source>
</evidence>
<evidence type="ECO:0000269" key="4">
    <source>
    </source>
</evidence>
<evidence type="ECO:0000269" key="5">
    <source>
    </source>
</evidence>
<evidence type="ECO:0000269" key="6">
    <source>
    </source>
</evidence>
<evidence type="ECO:0000305" key="7"/>
<name>EIF3C_SCHPO</name>
<organism>
    <name type="scientific">Schizosaccharomyces pombe (strain 972 / ATCC 24843)</name>
    <name type="common">Fission yeast</name>
    <dbReference type="NCBI Taxonomy" id="284812"/>
    <lineage>
        <taxon>Eukaryota</taxon>
        <taxon>Fungi</taxon>
        <taxon>Dikarya</taxon>
        <taxon>Ascomycota</taxon>
        <taxon>Taphrinomycotina</taxon>
        <taxon>Schizosaccharomycetes</taxon>
        <taxon>Schizosaccharomycetales</taxon>
        <taxon>Schizosaccharomycetaceae</taxon>
        <taxon>Schizosaccharomyces</taxon>
    </lineage>
</organism>
<sequence>MSRFFKGGSSDSDAESVDSSEENRLTSSRLKKQDDSSSEEESSEEESASSSESESSEEESESEESEVEVPKKKAVAASEDSESDSESSEEEEETESEEDSEVSDESESESESESESEEESESEEESDESERSGPSSFLKKPEKEEAKPAGLKFLRGESSEESSDEEEGRRVVKSAKDKRYEEFISCMETIKNAMSSNNWIVVSNEFDHLNKVSQKCKEAGRNPPPYIEFLSALDQKLESADKAFIKSLDAANGRAFNALKQRVRKNNRQFQSDIDRYRKDPEGFMKPAELNEIPKPAGKAGQDEVIVDGVATRGIVAPTEGLGKPEEITPADIFKYLRAIFEARGKKSTDRSEQIRLLEKLSTIAVTDYQRLRVKVALLAVRFDINTGSGQYMPIDQWNAALTELHSILDIFDANPKIVIVEQVEDENEEEEEAIAAAENNNGVIQVQGSVVSFLERLDDEFTRSLQMIDPHTPEYIDRLKDETSLYTLLVRSQGYLERIGVVENTARLIMRRLDRVYYKPEQVIRANEEVAWRSFPPTFDLTITPRATTTTPDILIHSLCVYLYNNGVSLLRTRAMLCHIYHEALQNRFYKARDMLLMSHLQDSVHAADIATQILHNRTMVQIGLCAFRNGMVQETQYALQDISTTGRVKELLGQGIQAPKFGQFTPDQDRLDKQLVLPFHMHINLELLECVYLTCSMLMEIPAMAAASSTASDSRKRVISRPFRRMLEYIDRQLFVGPPENTREYIMQASKALADGEWRRCEEFIHAIKIWSLMPDADKIKQMLSEKIREEGLRTYLLAYAAFYDSVSLEFLATTFDLPVQRVTVIVSRLLSKREIHAALDQVHGAIIFERVEINKLESLTVSLSEKTAQLNEANEKLYEQKTQHTNPQENRRRDKGGSVKRRNERTENRNRSDMN</sequence>
<feature type="chain" id="PRO_0000123529" description="Eukaryotic translation initiation factor 3 subunit C">
    <location>
        <begin position="1"/>
        <end position="918"/>
    </location>
</feature>
<feature type="domain" description="PCI" evidence="2">
    <location>
        <begin position="681"/>
        <end position="856"/>
    </location>
</feature>
<feature type="region of interest" description="Disordered" evidence="3">
    <location>
        <begin position="1"/>
        <end position="174"/>
    </location>
</feature>
<feature type="region of interest" description="Disordered" evidence="3">
    <location>
        <begin position="879"/>
        <end position="918"/>
    </location>
</feature>
<feature type="compositionally biased region" description="Acidic residues" evidence="3">
    <location>
        <begin position="36"/>
        <end position="47"/>
    </location>
</feature>
<feature type="compositionally biased region" description="Acidic residues" evidence="3">
    <location>
        <begin position="54"/>
        <end position="67"/>
    </location>
</feature>
<feature type="compositionally biased region" description="Acidic residues" evidence="3">
    <location>
        <begin position="79"/>
        <end position="128"/>
    </location>
</feature>
<feature type="compositionally biased region" description="Basic and acidic residues" evidence="3">
    <location>
        <begin position="907"/>
        <end position="918"/>
    </location>
</feature>
<feature type="modified residue" description="Phosphoserine" evidence="1 6">
    <location>
        <position position="10"/>
    </location>
</feature>
<feature type="modified residue" description="Phosphoserine" evidence="1 6">
    <location>
        <position position="12"/>
    </location>
</feature>
<feature type="modified residue" description="Phosphoserine" evidence="1 6">
    <location>
        <position position="16"/>
    </location>
</feature>
<feature type="modified residue" description="Phosphoserine" evidence="1 6">
    <location>
        <position position="19"/>
    </location>
</feature>
<feature type="modified residue" description="Phosphoserine" evidence="1 6">
    <location>
        <position position="20"/>
    </location>
</feature>
<feature type="modified residue" description="Phosphothreonine" evidence="1 6">
    <location>
        <position position="667"/>
    </location>
</feature>
<feature type="sequence conflict" description="In Ref. 2; BAA13802." evidence="7" ref="2">
    <original>M</original>
    <variation>I</variation>
    <location>
        <position position="683"/>
    </location>
</feature>
<comment type="function">
    <text evidence="1">Component of the eukaryotic translation initiation factor 3 (eIF-3) complex, which is involved in protein synthesis of a specialized repertoire of mRNAs and, together with other initiation factors, stimulates binding of mRNA and methionyl-tRNAi to the 40S ribosome. The eIF-3 complex specifically targets and initiates translation of a subset of mRNAs involved in cell proliferation.</text>
</comment>
<comment type="subunit">
    <text evidence="1 4 5">Component of the eukaryotic translation initiation factor 3 (eIF-3) complex. The eIF-3 complex appears to include tif32/eif3a, SPAC25G10.08/eif3b, tif33/eif3c, SPBC4C3.07/eif3f, tif35/eif3g and sum1/eif3i. This set of common subunits may also associate exclusively with either moe1/eif3d and int6/eif3e, or with SPAC821.05/eif3h and SPAC1751.03/eif3m. The eIF-3 complex may also include SPAC3A12.13c/eif3j.</text>
</comment>
<comment type="subcellular location">
    <subcellularLocation>
        <location evidence="1">Cytoplasm</location>
    </subcellularLocation>
</comment>
<comment type="similarity">
    <text evidence="1">Belongs to the eIF-3 subunit C family.</text>
</comment>
<proteinExistence type="evidence at protein level"/>
<keyword id="KW-0963">Cytoplasm</keyword>
<keyword id="KW-0396">Initiation factor</keyword>
<keyword id="KW-0597">Phosphoprotein</keyword>
<keyword id="KW-0648">Protein biosynthesis</keyword>
<keyword id="KW-1185">Reference proteome</keyword>
<gene>
    <name type="primary">nip1</name>
    <name type="synonym">eif3c</name>
    <name type="synonym">tif33</name>
    <name type="ORF">SPAC1E11.01c</name>
    <name type="ORF">SPAC4A8.16c</name>
    <name type="ORF">SPAC823.01c</name>
</gene>
<protein>
    <recommendedName>
        <fullName evidence="1">Eukaryotic translation initiation factor 3 subunit C</fullName>
        <shortName evidence="1">eIF3c</shortName>
    </recommendedName>
    <alternativeName>
        <fullName evidence="1">Eukaryotic translation initiation factor 3 93 kDa subunit homolog</fullName>
        <shortName evidence="1">eIF3 p93</shortName>
    </alternativeName>
    <alternativeName>
        <fullName evidence="1">Translation initiation factor eIF3, p93 subunit homolog</fullName>
    </alternativeName>
</protein>
<dbReference type="EMBL" id="CU329670">
    <property type="protein sequence ID" value="CAB11485.2"/>
    <property type="molecule type" value="Genomic_DNA"/>
</dbReference>
<dbReference type="EMBL" id="Z98599">
    <property type="protein sequence ID" value="CAB11250.2"/>
    <property type="molecule type" value="Genomic_DNA"/>
</dbReference>
<dbReference type="EMBL" id="D89140">
    <property type="protein sequence ID" value="BAA13802.1"/>
    <property type="molecule type" value="mRNA"/>
</dbReference>
<dbReference type="PIR" id="T38786">
    <property type="entry name" value="T38786"/>
</dbReference>
<dbReference type="PIR" id="T42417">
    <property type="entry name" value="T42417"/>
</dbReference>
<dbReference type="RefSeq" id="NP_593828.2">
    <property type="nucleotide sequence ID" value="NM_001019257.2"/>
</dbReference>
<dbReference type="SMR" id="O14164"/>
<dbReference type="BioGRID" id="280035">
    <property type="interactions" value="8"/>
</dbReference>
<dbReference type="FunCoup" id="O14164">
    <property type="interactions" value="762"/>
</dbReference>
<dbReference type="STRING" id="284812.O14164"/>
<dbReference type="iPTMnet" id="O14164"/>
<dbReference type="PaxDb" id="4896-SPAC4A8.16c.1"/>
<dbReference type="EnsemblFungi" id="SPAC4A8.16c.1">
    <property type="protein sequence ID" value="SPAC4A8.16c.1:pep"/>
    <property type="gene ID" value="SPAC4A8.16c"/>
</dbReference>
<dbReference type="GeneID" id="2543621"/>
<dbReference type="KEGG" id="spo:2543621"/>
<dbReference type="PomBase" id="SPAC4A8.16c"/>
<dbReference type="VEuPathDB" id="FungiDB:SPAC4A8.16c"/>
<dbReference type="eggNOG" id="KOG1076">
    <property type="taxonomic scope" value="Eukaryota"/>
</dbReference>
<dbReference type="HOGENOM" id="CLU_004304_0_2_1"/>
<dbReference type="InParanoid" id="O14164"/>
<dbReference type="OMA" id="FRCGLIK"/>
<dbReference type="PhylomeDB" id="O14164"/>
<dbReference type="Reactome" id="R-SPO-156827">
    <property type="pathway name" value="L13a-mediated translational silencing of Ceruloplasmin expression"/>
</dbReference>
<dbReference type="Reactome" id="R-SPO-72649">
    <property type="pathway name" value="Translation initiation complex formation"/>
</dbReference>
<dbReference type="Reactome" id="R-SPO-72689">
    <property type="pathway name" value="Formation of a pool of free 40S subunits"/>
</dbReference>
<dbReference type="Reactome" id="R-SPO-72695">
    <property type="pathway name" value="Formation of the ternary complex, and subsequently, the 43S complex"/>
</dbReference>
<dbReference type="Reactome" id="R-SPO-72702">
    <property type="pathway name" value="Ribosomal scanning and start codon recognition"/>
</dbReference>
<dbReference type="Reactome" id="R-SPO-72706">
    <property type="pathway name" value="GTP hydrolysis and joining of the 60S ribosomal subunit"/>
</dbReference>
<dbReference type="PRO" id="PR:O14164"/>
<dbReference type="Proteomes" id="UP000002485">
    <property type="component" value="Chromosome I"/>
</dbReference>
<dbReference type="GO" id="GO:0005829">
    <property type="term" value="C:cytosol"/>
    <property type="evidence" value="ECO:0007005"/>
    <property type="project" value="PomBase"/>
</dbReference>
<dbReference type="GO" id="GO:0016282">
    <property type="term" value="C:eukaryotic 43S preinitiation complex"/>
    <property type="evidence" value="ECO:0000314"/>
    <property type="project" value="PomBase"/>
</dbReference>
<dbReference type="GO" id="GO:0033290">
    <property type="term" value="C:eukaryotic 48S preinitiation complex"/>
    <property type="evidence" value="ECO:0007669"/>
    <property type="project" value="UniProtKB-UniRule"/>
</dbReference>
<dbReference type="GO" id="GO:0005852">
    <property type="term" value="C:eukaryotic translation initiation factor 3 complex"/>
    <property type="evidence" value="ECO:0000318"/>
    <property type="project" value="GO_Central"/>
</dbReference>
<dbReference type="GO" id="GO:0071540">
    <property type="term" value="C:eukaryotic translation initiation factor 3 complex, eIF3e"/>
    <property type="evidence" value="ECO:0000314"/>
    <property type="project" value="PomBase"/>
</dbReference>
<dbReference type="GO" id="GO:0071541">
    <property type="term" value="C:eukaryotic translation initiation factor 3 complex, eIF3m"/>
    <property type="evidence" value="ECO:0000314"/>
    <property type="project" value="PomBase"/>
</dbReference>
<dbReference type="GO" id="GO:0003723">
    <property type="term" value="F:RNA binding"/>
    <property type="evidence" value="ECO:0007669"/>
    <property type="project" value="InterPro"/>
</dbReference>
<dbReference type="GO" id="GO:0003743">
    <property type="term" value="F:translation initiation factor activity"/>
    <property type="evidence" value="ECO:0007669"/>
    <property type="project" value="UniProtKB-UniRule"/>
</dbReference>
<dbReference type="GO" id="GO:0031369">
    <property type="term" value="F:translation initiation factor binding"/>
    <property type="evidence" value="ECO:0000318"/>
    <property type="project" value="GO_Central"/>
</dbReference>
<dbReference type="GO" id="GO:0001732">
    <property type="term" value="P:formation of cytoplasmic translation initiation complex"/>
    <property type="evidence" value="ECO:0000305"/>
    <property type="project" value="PomBase"/>
</dbReference>
<dbReference type="GO" id="GO:0006413">
    <property type="term" value="P:translational initiation"/>
    <property type="evidence" value="ECO:0000318"/>
    <property type="project" value="GO_Central"/>
</dbReference>
<dbReference type="FunFam" id="1.10.10.10:FF:000300">
    <property type="entry name" value="Eukaryotic translation initiation factor 3 subunit C"/>
    <property type="match status" value="1"/>
</dbReference>
<dbReference type="Gene3D" id="1.10.10.10">
    <property type="entry name" value="Winged helix-like DNA-binding domain superfamily/Winged helix DNA-binding domain"/>
    <property type="match status" value="1"/>
</dbReference>
<dbReference type="HAMAP" id="MF_03002">
    <property type="entry name" value="eIF3c"/>
    <property type="match status" value="1"/>
</dbReference>
<dbReference type="InterPro" id="IPR027516">
    <property type="entry name" value="EIF3C"/>
</dbReference>
<dbReference type="InterPro" id="IPR008905">
    <property type="entry name" value="EIF3C_N_dom"/>
</dbReference>
<dbReference type="InterPro" id="IPR000717">
    <property type="entry name" value="PCI_dom"/>
</dbReference>
<dbReference type="InterPro" id="IPR036388">
    <property type="entry name" value="WH-like_DNA-bd_sf"/>
</dbReference>
<dbReference type="InterPro" id="IPR036390">
    <property type="entry name" value="WH_DNA-bd_sf"/>
</dbReference>
<dbReference type="PANTHER" id="PTHR13937">
    <property type="entry name" value="EUKARYOTIC TRANSLATION INITATION FACTOR 3, SUBUNIT 8 EIF3S8 -RELATED"/>
    <property type="match status" value="1"/>
</dbReference>
<dbReference type="PANTHER" id="PTHR13937:SF0">
    <property type="entry name" value="EUKARYOTIC TRANSLATION INITIATION FACTOR 3 SUBUNIT C-RELATED"/>
    <property type="match status" value="1"/>
</dbReference>
<dbReference type="Pfam" id="PF05470">
    <property type="entry name" value="eIF-3c_N"/>
    <property type="match status" value="1"/>
</dbReference>
<dbReference type="Pfam" id="PF01399">
    <property type="entry name" value="PCI"/>
    <property type="match status" value="1"/>
</dbReference>
<dbReference type="SMART" id="SM00088">
    <property type="entry name" value="PINT"/>
    <property type="match status" value="1"/>
</dbReference>
<dbReference type="SUPFAM" id="SSF46785">
    <property type="entry name" value="Winged helix' DNA-binding domain"/>
    <property type="match status" value="1"/>
</dbReference>
<dbReference type="PROSITE" id="PS50250">
    <property type="entry name" value="PCI"/>
    <property type="match status" value="1"/>
</dbReference>
<reference key="1">
    <citation type="journal article" date="2002" name="Nature">
        <title>The genome sequence of Schizosaccharomyces pombe.</title>
        <authorList>
            <person name="Wood V."/>
            <person name="Gwilliam R."/>
            <person name="Rajandream M.A."/>
            <person name="Lyne M.H."/>
            <person name="Lyne R."/>
            <person name="Stewart A."/>
            <person name="Sgouros J.G."/>
            <person name="Peat N."/>
            <person name="Hayles J."/>
            <person name="Baker S.G."/>
            <person name="Basham D."/>
            <person name="Bowman S."/>
            <person name="Brooks K."/>
            <person name="Brown D."/>
            <person name="Brown S."/>
            <person name="Chillingworth T."/>
            <person name="Churcher C.M."/>
            <person name="Collins M."/>
            <person name="Connor R."/>
            <person name="Cronin A."/>
            <person name="Davis P."/>
            <person name="Feltwell T."/>
            <person name="Fraser A."/>
            <person name="Gentles S."/>
            <person name="Goble A."/>
            <person name="Hamlin N."/>
            <person name="Harris D.E."/>
            <person name="Hidalgo J."/>
            <person name="Hodgson G."/>
            <person name="Holroyd S."/>
            <person name="Hornsby T."/>
            <person name="Howarth S."/>
            <person name="Huckle E.J."/>
            <person name="Hunt S."/>
            <person name="Jagels K."/>
            <person name="James K.D."/>
            <person name="Jones L."/>
            <person name="Jones M."/>
            <person name="Leather S."/>
            <person name="McDonald S."/>
            <person name="McLean J."/>
            <person name="Mooney P."/>
            <person name="Moule S."/>
            <person name="Mungall K.L."/>
            <person name="Murphy L.D."/>
            <person name="Niblett D."/>
            <person name="Odell C."/>
            <person name="Oliver K."/>
            <person name="O'Neil S."/>
            <person name="Pearson D."/>
            <person name="Quail M.A."/>
            <person name="Rabbinowitsch E."/>
            <person name="Rutherford K.M."/>
            <person name="Rutter S."/>
            <person name="Saunders D."/>
            <person name="Seeger K."/>
            <person name="Sharp S."/>
            <person name="Skelton J."/>
            <person name="Simmonds M.N."/>
            <person name="Squares R."/>
            <person name="Squares S."/>
            <person name="Stevens K."/>
            <person name="Taylor K."/>
            <person name="Taylor R.G."/>
            <person name="Tivey A."/>
            <person name="Walsh S.V."/>
            <person name="Warren T."/>
            <person name="Whitehead S."/>
            <person name="Woodward J.R."/>
            <person name="Volckaert G."/>
            <person name="Aert R."/>
            <person name="Robben J."/>
            <person name="Grymonprez B."/>
            <person name="Weltjens I."/>
            <person name="Vanstreels E."/>
            <person name="Rieger M."/>
            <person name="Schaefer M."/>
            <person name="Mueller-Auer S."/>
            <person name="Gabel C."/>
            <person name="Fuchs M."/>
            <person name="Duesterhoeft A."/>
            <person name="Fritzc C."/>
            <person name="Holzer E."/>
            <person name="Moestl D."/>
            <person name="Hilbert H."/>
            <person name="Borzym K."/>
            <person name="Langer I."/>
            <person name="Beck A."/>
            <person name="Lehrach H."/>
            <person name="Reinhardt R."/>
            <person name="Pohl T.M."/>
            <person name="Eger P."/>
            <person name="Zimmermann W."/>
            <person name="Wedler H."/>
            <person name="Wambutt R."/>
            <person name="Purnelle B."/>
            <person name="Goffeau A."/>
            <person name="Cadieu E."/>
            <person name="Dreano S."/>
            <person name="Gloux S."/>
            <person name="Lelaure V."/>
            <person name="Mottier S."/>
            <person name="Galibert F."/>
            <person name="Aves S.J."/>
            <person name="Xiang Z."/>
            <person name="Hunt C."/>
            <person name="Moore K."/>
            <person name="Hurst S.M."/>
            <person name="Lucas M."/>
            <person name="Rochet M."/>
            <person name="Gaillardin C."/>
            <person name="Tallada V.A."/>
            <person name="Garzon A."/>
            <person name="Thode G."/>
            <person name="Daga R.R."/>
            <person name="Cruzado L."/>
            <person name="Jimenez J."/>
            <person name="Sanchez M."/>
            <person name="del Rey F."/>
            <person name="Benito J."/>
            <person name="Dominguez A."/>
            <person name="Revuelta J.L."/>
            <person name="Moreno S."/>
            <person name="Armstrong J."/>
            <person name="Forsburg S.L."/>
            <person name="Cerutti L."/>
            <person name="Lowe T."/>
            <person name="McCombie W.R."/>
            <person name="Paulsen I."/>
            <person name="Potashkin J."/>
            <person name="Shpakovski G.V."/>
            <person name="Ussery D."/>
            <person name="Barrell B.G."/>
            <person name="Nurse P."/>
        </authorList>
    </citation>
    <scope>NUCLEOTIDE SEQUENCE [LARGE SCALE GENOMIC DNA]</scope>
    <source>
        <strain>972 / ATCC 24843</strain>
    </source>
</reference>
<reference key="2">
    <citation type="journal article" date="1997" name="DNA Res.">
        <title>Identification of open reading frames in Schizosaccharomyces pombe cDNAs.</title>
        <authorList>
            <person name="Yoshioka S."/>
            <person name="Kato K."/>
            <person name="Nakai K."/>
            <person name="Okayama H."/>
            <person name="Nojima H."/>
        </authorList>
    </citation>
    <scope>NUCLEOTIDE SEQUENCE [LARGE SCALE MRNA] OF 571-918</scope>
    <source>
        <strain>PR745</strain>
    </source>
</reference>
<reference key="3">
    <citation type="journal article" date="2001" name="J. Biol. Chem.">
        <title>Fission yeast homolog of murine Int-6 protein, encoded by mouse mammary tumor virus integration site, is associated with the conserved core subunits of eukaryotic translation initiation factor 3.</title>
        <authorList>
            <person name="Akiyoshi Y."/>
            <person name="Clayton J."/>
            <person name="Phan L."/>
            <person name="Yamamoto M."/>
            <person name="Hinnebusch A.G."/>
            <person name="Watanabe Y."/>
            <person name="Asano K."/>
        </authorList>
    </citation>
    <scope>IDENTIFICATION IN THE EIF-3 COMPLEX</scope>
    <scope>IDENTIFICATION BY MASS SPECTROMETRY</scope>
</reference>
<reference key="4">
    <citation type="journal article" date="2005" name="BMC Biol.">
        <title>PCI proteins eIF3e and eIF3m define distinct translation initiation factor 3 complexes.</title>
        <authorList>
            <person name="Zhou C."/>
            <person name="Arslan F."/>
            <person name="Wee S."/>
            <person name="Krishnan S."/>
            <person name="Ivanov A.R."/>
            <person name="Oliva A."/>
            <person name="Leatherwood J."/>
            <person name="Wolf D.A."/>
        </authorList>
    </citation>
    <scope>IDENTIFICATION IN THE EIF-3 COMPLEX</scope>
    <scope>IDENTIFICATION BY MASS SPECTROMETRY</scope>
</reference>
<reference key="5">
    <citation type="journal article" date="2008" name="J. Proteome Res.">
        <title>Phosphoproteome analysis of fission yeast.</title>
        <authorList>
            <person name="Wilson-Grady J.T."/>
            <person name="Villen J."/>
            <person name="Gygi S.P."/>
        </authorList>
    </citation>
    <scope>PHOSPHORYLATION [LARGE SCALE ANALYSIS] AT SER-10; SER-12; SER-16; SER-19; SER-20 AND THR-667</scope>
    <scope>IDENTIFICATION BY MASS SPECTROMETRY</scope>
</reference>
<accession>O14164</accession>
<accession>O13885</accession>
<accession>P78791</accession>
<accession>Q9P6P4</accession>